<keyword id="KW-1003">Cell membrane</keyword>
<keyword id="KW-0472">Membrane</keyword>
<keyword id="KW-1185">Reference proteome</keyword>
<keyword id="KW-0812">Transmembrane</keyword>
<keyword id="KW-1133">Transmembrane helix</keyword>
<feature type="chain" id="PRO_0000169379" description="Uncharacterized protein PA0392">
    <location>
        <begin position="1"/>
        <end position="197"/>
    </location>
</feature>
<feature type="transmembrane region" description="Helical" evidence="1">
    <location>
        <begin position="9"/>
        <end position="29"/>
    </location>
</feature>
<feature type="transmembrane region" description="Helical" evidence="1">
    <location>
        <begin position="67"/>
        <end position="87"/>
    </location>
</feature>
<feature type="transmembrane region" description="Helical" evidence="1">
    <location>
        <begin position="104"/>
        <end position="124"/>
    </location>
</feature>
<feature type="transmembrane region" description="Helical" evidence="1">
    <location>
        <begin position="160"/>
        <end position="180"/>
    </location>
</feature>
<protein>
    <recommendedName>
        <fullName>Uncharacterized protein PA0392</fullName>
    </recommendedName>
</protein>
<sequence length="197" mass="21745">MIGLNTAAIYILQTLGSLYLLIVLLRFILQLVRADFYNPLSQFIVRATKPLLNPLRRIIPGFGGIDLASLVLAILIQLVLMILILMLMGYGVGGFIMQLLIWSIIAVTSLFLKVFFFALIISVILSWVAPGSYNPGAQLVNQICEPLLMPFRKLLPNLGGLDLSPIFAFLALKLIDMLVINNLAAMTGMPQQLSIFL</sequence>
<comment type="subcellular location">
    <subcellularLocation>
        <location evidence="2">Cell membrane</location>
        <topology evidence="2">Multi-pass membrane protein</topology>
    </subcellularLocation>
</comment>
<comment type="similarity">
    <text evidence="2">Belongs to the YggT family.</text>
</comment>
<gene>
    <name type="ordered locus">PA0392</name>
</gene>
<evidence type="ECO:0000255" key="1"/>
<evidence type="ECO:0000305" key="2"/>
<name>Y392_PSEAE</name>
<accession>P25254</accession>
<reference key="1">
    <citation type="journal article" date="2000" name="Nature">
        <title>Complete genome sequence of Pseudomonas aeruginosa PAO1, an opportunistic pathogen.</title>
        <authorList>
            <person name="Stover C.K."/>
            <person name="Pham X.-Q.T."/>
            <person name="Erwin A.L."/>
            <person name="Mizoguchi S.D."/>
            <person name="Warrener P."/>
            <person name="Hickey M.J."/>
            <person name="Brinkman F.S.L."/>
            <person name="Hufnagle W.O."/>
            <person name="Kowalik D.J."/>
            <person name="Lagrou M."/>
            <person name="Garber R.L."/>
            <person name="Goltry L."/>
            <person name="Tolentino E."/>
            <person name="Westbrock-Wadman S."/>
            <person name="Yuan Y."/>
            <person name="Brody L.L."/>
            <person name="Coulter S.N."/>
            <person name="Folger K.R."/>
            <person name="Kas A."/>
            <person name="Larbig K."/>
            <person name="Lim R.M."/>
            <person name="Smith K.A."/>
            <person name="Spencer D.H."/>
            <person name="Wong G.K.-S."/>
            <person name="Wu Z."/>
            <person name="Paulsen I.T."/>
            <person name="Reizer J."/>
            <person name="Saier M.H. Jr."/>
            <person name="Hancock R.E.W."/>
            <person name="Lory S."/>
            <person name="Olson M.V."/>
        </authorList>
    </citation>
    <scope>NUCLEOTIDE SEQUENCE [LARGE SCALE GENOMIC DNA]</scope>
    <source>
        <strain>ATCC 15692 / DSM 22644 / CIP 104116 / JCM 14847 / LMG 12228 / 1C / PRS 101 / PAO1</strain>
    </source>
</reference>
<reference key="2">
    <citation type="journal article" date="1990" name="Gene">
        <title>Comparison of proC and other housekeeping genes of Pseudomonas aeruginosa with their counterparts in Escherichia coli.</title>
        <authorList>
            <person name="Savioz A."/>
            <person name="Jeenes D.J."/>
            <person name="Kocher H.P."/>
            <person name="Haas D."/>
        </authorList>
    </citation>
    <scope>NUCLEOTIDE SEQUENCE [GENOMIC DNA] OF 1-78</scope>
    <source>
        <strain>ATCC 15692 / DSM 22644 / CIP 104116 / JCM 14847 / LMG 12228 / 1C / PRS 101 / PAO1</strain>
    </source>
</reference>
<organism>
    <name type="scientific">Pseudomonas aeruginosa (strain ATCC 15692 / DSM 22644 / CIP 104116 / JCM 14847 / LMG 12228 / 1C / PRS 101 / PAO1)</name>
    <dbReference type="NCBI Taxonomy" id="208964"/>
    <lineage>
        <taxon>Bacteria</taxon>
        <taxon>Pseudomonadati</taxon>
        <taxon>Pseudomonadota</taxon>
        <taxon>Gammaproteobacteria</taxon>
        <taxon>Pseudomonadales</taxon>
        <taxon>Pseudomonadaceae</taxon>
        <taxon>Pseudomonas</taxon>
    </lineage>
</organism>
<proteinExistence type="inferred from homology"/>
<dbReference type="EMBL" id="AE004091">
    <property type="protein sequence ID" value="AAG03781.1"/>
    <property type="molecule type" value="Genomic_DNA"/>
</dbReference>
<dbReference type="EMBL" id="M33557">
    <property type="status" value="NOT_ANNOTATED_CDS"/>
    <property type="molecule type" value="Genomic_DNA"/>
</dbReference>
<dbReference type="PIR" id="G83597">
    <property type="entry name" value="G83597"/>
</dbReference>
<dbReference type="PIR" id="PQ0053">
    <property type="entry name" value="PQ0053"/>
</dbReference>
<dbReference type="RefSeq" id="NP_249083.1">
    <property type="nucleotide sequence ID" value="NC_002516.2"/>
</dbReference>
<dbReference type="RefSeq" id="WP_003084544.1">
    <property type="nucleotide sequence ID" value="NZ_QZGE01000016.1"/>
</dbReference>
<dbReference type="SMR" id="P25254"/>
<dbReference type="FunCoup" id="P25254">
    <property type="interactions" value="100"/>
</dbReference>
<dbReference type="STRING" id="208964.PA0392"/>
<dbReference type="PaxDb" id="208964-PA0392"/>
<dbReference type="DNASU" id="878514"/>
<dbReference type="GeneID" id="878514"/>
<dbReference type="KEGG" id="pae:PA0392"/>
<dbReference type="PATRIC" id="fig|208964.12.peg.413"/>
<dbReference type="PseudoCAP" id="PA0392"/>
<dbReference type="HOGENOM" id="CLU_089905_1_0_6"/>
<dbReference type="InParanoid" id="P25254"/>
<dbReference type="OrthoDB" id="9806665at2"/>
<dbReference type="PhylomeDB" id="P25254"/>
<dbReference type="BioCyc" id="PAER208964:G1FZ6-396-MONOMER"/>
<dbReference type="Proteomes" id="UP000002438">
    <property type="component" value="Chromosome"/>
</dbReference>
<dbReference type="GO" id="GO:0005886">
    <property type="term" value="C:plasma membrane"/>
    <property type="evidence" value="ECO:0007669"/>
    <property type="project" value="UniProtKB-SubCell"/>
</dbReference>
<dbReference type="InterPro" id="IPR003425">
    <property type="entry name" value="CCB3/YggT"/>
</dbReference>
<dbReference type="PANTHER" id="PTHR33219:SF14">
    <property type="entry name" value="PROTEIN COFACTOR ASSEMBLY OF COMPLEX C SUBUNIT B CCB3, CHLOROPLASTIC-RELATED"/>
    <property type="match status" value="1"/>
</dbReference>
<dbReference type="PANTHER" id="PTHR33219">
    <property type="entry name" value="YLMG HOMOLOG PROTEIN 2, CHLOROPLASTIC"/>
    <property type="match status" value="1"/>
</dbReference>
<dbReference type="Pfam" id="PF02325">
    <property type="entry name" value="YGGT"/>
    <property type="match status" value="2"/>
</dbReference>